<protein>
    <recommendedName>
        <fullName evidence="1">Chaperonin GroEL</fullName>
        <ecNumber evidence="1">5.6.1.7</ecNumber>
    </recommendedName>
    <alternativeName>
        <fullName evidence="1">60 kDa chaperonin</fullName>
    </alternativeName>
    <alternativeName>
        <fullName evidence="1">Chaperonin-60</fullName>
        <shortName evidence="1">Cpn60</shortName>
    </alternativeName>
</protein>
<gene>
    <name evidence="1" type="primary">groEL</name>
    <name evidence="1" type="synonym">groL</name>
    <name type="synonym">mopA</name>
</gene>
<organism>
    <name type="scientific">Neorickettsia risticii</name>
    <name type="common">Ehrlichia risticii</name>
    <dbReference type="NCBI Taxonomy" id="950"/>
    <lineage>
        <taxon>Bacteria</taxon>
        <taxon>Pseudomonadati</taxon>
        <taxon>Pseudomonadota</taxon>
        <taxon>Alphaproteobacteria</taxon>
        <taxon>Rickettsiales</taxon>
        <taxon>Anaplasmataceae</taxon>
        <taxon>Neorickettsia</taxon>
    </lineage>
</organism>
<accession>P48214</accession>
<accession>O34196</accession>
<accession>O52314</accession>
<accession>O52315</accession>
<accession>O52316</accession>
<accession>O52317</accession>
<accession>O52392</accession>
<feature type="chain" id="PRO_0000063364" description="Chaperonin GroEL">
    <location>
        <begin position="1"/>
        <end position="548"/>
    </location>
</feature>
<feature type="binding site" evidence="1">
    <location>
        <begin position="29"/>
        <end position="32"/>
    </location>
    <ligand>
        <name>ATP</name>
        <dbReference type="ChEBI" id="CHEBI:30616"/>
    </ligand>
</feature>
<feature type="binding site" evidence="1">
    <location>
        <position position="50"/>
    </location>
    <ligand>
        <name>ATP</name>
        <dbReference type="ChEBI" id="CHEBI:30616"/>
    </ligand>
</feature>
<feature type="binding site" evidence="1">
    <location>
        <begin position="86"/>
        <end position="90"/>
    </location>
    <ligand>
        <name>ATP</name>
        <dbReference type="ChEBI" id="CHEBI:30616"/>
    </ligand>
</feature>
<feature type="binding site" evidence="1">
    <location>
        <position position="416"/>
    </location>
    <ligand>
        <name>ATP</name>
        <dbReference type="ChEBI" id="CHEBI:30616"/>
    </ligand>
</feature>
<feature type="binding site" evidence="1">
    <location>
        <position position="497"/>
    </location>
    <ligand>
        <name>ATP</name>
        <dbReference type="ChEBI" id="CHEBI:30616"/>
    </ligand>
</feature>
<feature type="sequence variant" description="In strain: SHSN-2.">
    <original>E</original>
    <variation>K</variation>
    <location>
        <position position="163"/>
    </location>
</feature>
<feature type="sequence variant" description="In strain: Danny/horse/Oregon.">
    <original>I</original>
    <variation>T</variation>
    <location>
        <position position="205"/>
    </location>
</feature>
<feature type="sequence variant" description="In strain: Thorenberg/horse/Oregon.">
    <original>E</original>
    <variation>G</variation>
    <location>
        <position position="209"/>
    </location>
</feature>
<feature type="sequence variant" description="In strain: Stagnicola/snail/Oregon.">
    <original>P</original>
    <variation>S</variation>
    <location>
        <position position="235"/>
    </location>
</feature>
<feature type="sequence variant" description="In strain: Drpepper/horse/California.">
    <original>K</original>
    <variation>N</variation>
    <location>
        <position position="277"/>
    </location>
</feature>
<feature type="sequence variant" description="In strain: Stagnicola/snail/Oregon.">
    <original>K</original>
    <variation>R</variation>
    <location>
        <position position="299"/>
    </location>
</feature>
<feature type="sequence conflict" description="In Ref. 2; AAA65602." evidence="2" ref="2">
    <original>K</original>
    <variation>N</variation>
    <location>
        <position position="60"/>
    </location>
</feature>
<feature type="sequence conflict" description="In Ref. 2; AAA65602." evidence="2" ref="2">
    <original>RAR</original>
    <variation>PRT</variation>
    <location>
        <begin position="121"/>
        <end position="123"/>
    </location>
</feature>
<feature type="sequence conflict" description="In Ref. 2; AAA65602." evidence="2" ref="2">
    <original>E</original>
    <variation>V</variation>
    <location>
        <position position="339"/>
    </location>
</feature>
<feature type="sequence conflict" description="In Ref. 2; AAA65602." evidence="2" ref="2">
    <original>V</original>
    <variation>G</variation>
    <location>
        <position position="377"/>
    </location>
</feature>
<reference key="1">
    <citation type="journal article" date="1997" name="J. Clin. Microbiol.">
        <title>PCR amplification and comparison of nucleotide sequences from the groESL heat shock operon of Ehrlichia species.</title>
        <authorList>
            <person name="Sumner J.W."/>
            <person name="Nicholson W.L."/>
            <person name="Massung R.F."/>
        </authorList>
    </citation>
    <scope>NUCLEOTIDE SEQUENCE [GENOMIC DNA] OF 1-409</scope>
</reference>
<reference key="2">
    <citation type="submission" date="1995-04" db="EMBL/GenBank/DDBJ databases">
        <authorList>
            <person name="Vemulapalli R."/>
            <person name="Biswas B."/>
            <person name="Dutta S.K."/>
        </authorList>
    </citation>
    <scope>NUCLEOTIDE SEQUENCE [GENOMIC DNA] OF 39-548</scope>
    <source>
        <strain>90-12</strain>
    </source>
</reference>
<reference key="3">
    <citation type="journal article" date="1998" name="Appl. Environ. Microbiol.">
        <title>Detection of Ehrlichia risticii, the agent of Potomac horse fever, in freshwater stream snails (Pleuroceridae: Juga spp.) from Northern California.</title>
        <authorList>
            <person name="Barlough J.E."/>
            <person name="Reubel G.H."/>
            <person name="Madigan J.E."/>
            <person name="Vredevoe L.K."/>
            <person name="Miller P.E."/>
            <person name="Rikihisa Y."/>
        </authorList>
    </citation>
    <scope>NUCLEOTIDE SEQUENCE [GENOMIC DNA] OF 145-319</scope>
    <source>
        <strain>Various strains</strain>
    </source>
</reference>
<reference key="4">
    <citation type="journal article" date="1998" name="J. Clin. Microbiol.">
        <title>Production and characterization of Ehrlichia risticii, the agent of potomac horse fever, from snails (Pleuroceridae: Juga spp) in aquarium culture and genetic comparison to equine strains.</title>
        <authorList>
            <person name="Reubel G.H."/>
            <person name="Barlough J.E."/>
            <person name="Madigan J.E."/>
        </authorList>
    </citation>
    <scope>NUCLEOTIDE SEQUENCE [GENOMIC DNA] OF 145-319</scope>
    <source>
        <strain>Various strains</strain>
    </source>
</reference>
<evidence type="ECO:0000255" key="1">
    <source>
        <dbReference type="HAMAP-Rule" id="MF_00600"/>
    </source>
</evidence>
<evidence type="ECO:0000305" key="2"/>
<dbReference type="EC" id="5.6.1.7" evidence="1"/>
<dbReference type="EMBL" id="U96732">
    <property type="protein sequence ID" value="AAB65633.1"/>
    <property type="molecule type" value="Genomic_DNA"/>
</dbReference>
<dbReference type="EMBL" id="U24396">
    <property type="protein sequence ID" value="AAA65602.1"/>
    <property type="molecule type" value="Genomic_DNA"/>
</dbReference>
<dbReference type="EMBL" id="AF037212">
    <property type="protein sequence ID" value="AAB95414.1"/>
    <property type="molecule type" value="Genomic_DNA"/>
</dbReference>
<dbReference type="EMBL" id="AF037213">
    <property type="protein sequence ID" value="AAB95415.1"/>
    <property type="molecule type" value="Genomic_DNA"/>
</dbReference>
<dbReference type="EMBL" id="AF037214">
    <property type="protein sequence ID" value="AAB95416.1"/>
    <property type="molecule type" value="Genomic_DNA"/>
</dbReference>
<dbReference type="EMBL" id="AF036660">
    <property type="protein sequence ID" value="AAC01584.1"/>
    <property type="molecule type" value="Genomic_DNA"/>
</dbReference>
<dbReference type="EMBL" id="AF036661">
    <property type="protein sequence ID" value="AAC01585.1"/>
    <property type="molecule type" value="Genomic_DNA"/>
</dbReference>
<dbReference type="EMBL" id="AF036662">
    <property type="protein sequence ID" value="AAC01586.1"/>
    <property type="molecule type" value="Genomic_DNA"/>
</dbReference>
<dbReference type="EMBL" id="AF036663">
    <property type="protein sequence ID" value="AAC01587.1"/>
    <property type="molecule type" value="Genomic_DNA"/>
</dbReference>
<dbReference type="EMBL" id="AF036664">
    <property type="protein sequence ID" value="AAC01588.1"/>
    <property type="molecule type" value="Genomic_DNA"/>
</dbReference>
<dbReference type="EMBL" id="AF036665">
    <property type="protein sequence ID" value="AAC01589.1"/>
    <property type="molecule type" value="Genomic_DNA"/>
</dbReference>
<dbReference type="EMBL" id="AF036666">
    <property type="protein sequence ID" value="AAC01590.1"/>
    <property type="molecule type" value="Genomic_DNA"/>
</dbReference>
<dbReference type="EMBL" id="AF036667">
    <property type="protein sequence ID" value="AAC01591.1"/>
    <property type="molecule type" value="Genomic_DNA"/>
</dbReference>
<dbReference type="EMBL" id="AF036668">
    <property type="protein sequence ID" value="AAC01592.1"/>
    <property type="molecule type" value="Genomic_DNA"/>
</dbReference>
<dbReference type="EMBL" id="AF036669">
    <property type="protein sequence ID" value="AAC01593.1"/>
    <property type="molecule type" value="Genomic_DNA"/>
</dbReference>
<dbReference type="EMBL" id="AF036670">
    <property type="protein sequence ID" value="AAC01594.1"/>
    <property type="molecule type" value="Genomic_DNA"/>
</dbReference>
<dbReference type="SMR" id="P48214"/>
<dbReference type="GO" id="GO:0005737">
    <property type="term" value="C:cytoplasm"/>
    <property type="evidence" value="ECO:0007669"/>
    <property type="project" value="UniProtKB-SubCell"/>
</dbReference>
<dbReference type="GO" id="GO:0005524">
    <property type="term" value="F:ATP binding"/>
    <property type="evidence" value="ECO:0007669"/>
    <property type="project" value="UniProtKB-UniRule"/>
</dbReference>
<dbReference type="GO" id="GO:0140662">
    <property type="term" value="F:ATP-dependent protein folding chaperone"/>
    <property type="evidence" value="ECO:0007669"/>
    <property type="project" value="InterPro"/>
</dbReference>
<dbReference type="GO" id="GO:0016853">
    <property type="term" value="F:isomerase activity"/>
    <property type="evidence" value="ECO:0007669"/>
    <property type="project" value="UniProtKB-KW"/>
</dbReference>
<dbReference type="GO" id="GO:0051082">
    <property type="term" value="F:unfolded protein binding"/>
    <property type="evidence" value="ECO:0007669"/>
    <property type="project" value="UniProtKB-UniRule"/>
</dbReference>
<dbReference type="GO" id="GO:0042026">
    <property type="term" value="P:protein refolding"/>
    <property type="evidence" value="ECO:0007669"/>
    <property type="project" value="UniProtKB-UniRule"/>
</dbReference>
<dbReference type="CDD" id="cd03344">
    <property type="entry name" value="GroEL"/>
    <property type="match status" value="1"/>
</dbReference>
<dbReference type="FunFam" id="3.50.7.10:FF:000001">
    <property type="entry name" value="60 kDa chaperonin"/>
    <property type="match status" value="1"/>
</dbReference>
<dbReference type="Gene3D" id="3.50.7.10">
    <property type="entry name" value="GroEL"/>
    <property type="match status" value="1"/>
</dbReference>
<dbReference type="Gene3D" id="1.10.560.10">
    <property type="entry name" value="GroEL-like equatorial domain"/>
    <property type="match status" value="1"/>
</dbReference>
<dbReference type="Gene3D" id="3.30.260.10">
    <property type="entry name" value="TCP-1-like chaperonin intermediate domain"/>
    <property type="match status" value="1"/>
</dbReference>
<dbReference type="HAMAP" id="MF_00600">
    <property type="entry name" value="CH60"/>
    <property type="match status" value="1"/>
</dbReference>
<dbReference type="InterPro" id="IPR018370">
    <property type="entry name" value="Chaperonin_Cpn60_CS"/>
</dbReference>
<dbReference type="InterPro" id="IPR001844">
    <property type="entry name" value="Cpn60/GroEL"/>
</dbReference>
<dbReference type="InterPro" id="IPR002423">
    <property type="entry name" value="Cpn60/GroEL/TCP-1"/>
</dbReference>
<dbReference type="InterPro" id="IPR027409">
    <property type="entry name" value="GroEL-like_apical_dom_sf"/>
</dbReference>
<dbReference type="InterPro" id="IPR027413">
    <property type="entry name" value="GROEL-like_equatorial_sf"/>
</dbReference>
<dbReference type="InterPro" id="IPR027410">
    <property type="entry name" value="TCP-1-like_intermed_sf"/>
</dbReference>
<dbReference type="NCBIfam" id="TIGR02348">
    <property type="entry name" value="GroEL"/>
    <property type="match status" value="1"/>
</dbReference>
<dbReference type="NCBIfam" id="NF000592">
    <property type="entry name" value="PRK00013.1"/>
    <property type="match status" value="1"/>
</dbReference>
<dbReference type="NCBIfam" id="NF009487">
    <property type="entry name" value="PRK12849.1"/>
    <property type="match status" value="1"/>
</dbReference>
<dbReference type="NCBIfam" id="NF009488">
    <property type="entry name" value="PRK12850.1"/>
    <property type="match status" value="1"/>
</dbReference>
<dbReference type="NCBIfam" id="NF009489">
    <property type="entry name" value="PRK12851.1"/>
    <property type="match status" value="1"/>
</dbReference>
<dbReference type="PANTHER" id="PTHR45633">
    <property type="entry name" value="60 KDA HEAT SHOCK PROTEIN, MITOCHONDRIAL"/>
    <property type="match status" value="1"/>
</dbReference>
<dbReference type="Pfam" id="PF00118">
    <property type="entry name" value="Cpn60_TCP1"/>
    <property type="match status" value="1"/>
</dbReference>
<dbReference type="PRINTS" id="PR00298">
    <property type="entry name" value="CHAPERONIN60"/>
</dbReference>
<dbReference type="SUPFAM" id="SSF52029">
    <property type="entry name" value="GroEL apical domain-like"/>
    <property type="match status" value="1"/>
</dbReference>
<dbReference type="SUPFAM" id="SSF48592">
    <property type="entry name" value="GroEL equatorial domain-like"/>
    <property type="match status" value="1"/>
</dbReference>
<dbReference type="SUPFAM" id="SSF54849">
    <property type="entry name" value="GroEL-intermediate domain like"/>
    <property type="match status" value="1"/>
</dbReference>
<dbReference type="PROSITE" id="PS00296">
    <property type="entry name" value="CHAPERONINS_CPN60"/>
    <property type="match status" value="1"/>
</dbReference>
<comment type="function">
    <text evidence="1">Together with its co-chaperonin GroES, plays an essential role in assisting protein folding. The GroEL-GroES system forms a nano-cage that allows encapsulation of the non-native substrate proteins and provides a physical environment optimized to promote and accelerate protein folding.</text>
</comment>
<comment type="catalytic activity">
    <reaction evidence="1">
        <text>ATP + H2O + a folded polypeptide = ADP + phosphate + an unfolded polypeptide.</text>
        <dbReference type="EC" id="5.6.1.7"/>
    </reaction>
</comment>
<comment type="subunit">
    <text evidence="1">Forms a cylinder of 14 subunits composed of two heptameric rings stacked back-to-back. Interacts with the co-chaperonin GroES.</text>
</comment>
<comment type="subcellular location">
    <subcellularLocation>
        <location evidence="1">Cytoplasm</location>
    </subcellularLocation>
</comment>
<comment type="similarity">
    <text evidence="1">Belongs to the chaperonin (HSP60) family.</text>
</comment>
<sequence length="548" mass="58208">MANEVISGEQLQKVIRDAADLVVSSAGVTLGPEGRPVIMSKSYGGPEVTKDGYKVINNLKPEDEKIAKIVELLNQATSQANEKAGDGTTTATILVGNMIKNAHKHIAAQRSRTKLKSGMKRARDEVVKYIQSVAKKINSEEEIAQVGSISANGNSEIGNKIAEAMNKVGKEGVITVEEGKGLDEFSVSVVQGMVFDRGYVSPYFITNPEKMIVEFDNPYVLLANKKLSSIQPMVPLLETIVRSNRAVVIIAEDVEGEALTSLVLSKMRGSLKACAVKAPGFGDRRSEMLEDIRILTGAKTLVSDDLGVTVESLTVEDLGTAKSIIISKDSTTIVDGGGEKTSIDARVKQIKTQIDKTTSDYDKEKLQERLAKLAGGVAVLKVGGATEVEVKERKDRVEDALHATRAAVEEGIVPGGGATLLSAIAVLEKLSSDDDDEQAGINIVKSALKAPISQIVENAGEDASVITYNLLESKDPNRIFDARELKYVDAFKAGIIDPAKVVRVALESAVSVASVLVTTEALIVDLPTKDNGSPSMMPGGGMGGMGGF</sequence>
<proteinExistence type="inferred from homology"/>
<name>CH60_NEORS</name>
<keyword id="KW-0067">ATP-binding</keyword>
<keyword id="KW-0143">Chaperone</keyword>
<keyword id="KW-0963">Cytoplasm</keyword>
<keyword id="KW-0413">Isomerase</keyword>
<keyword id="KW-0547">Nucleotide-binding</keyword>